<reference key="1">
    <citation type="submission" date="2008-01" db="EMBL/GenBank/DDBJ databases">
        <title>Complete sequence of Thermoanaerobacter pseudethanolicus 39E.</title>
        <authorList>
            <person name="Copeland A."/>
            <person name="Lucas S."/>
            <person name="Lapidus A."/>
            <person name="Barry K."/>
            <person name="Glavina del Rio T."/>
            <person name="Dalin E."/>
            <person name="Tice H."/>
            <person name="Pitluck S."/>
            <person name="Bruce D."/>
            <person name="Goodwin L."/>
            <person name="Saunders E."/>
            <person name="Brettin T."/>
            <person name="Detter J.C."/>
            <person name="Han C."/>
            <person name="Schmutz J."/>
            <person name="Larimer F."/>
            <person name="Land M."/>
            <person name="Hauser L."/>
            <person name="Kyrpides N."/>
            <person name="Lykidis A."/>
            <person name="Hemme C."/>
            <person name="Fields M.W."/>
            <person name="He Z."/>
            <person name="Zhou J."/>
            <person name="Richardson P."/>
        </authorList>
    </citation>
    <scope>NUCLEOTIDE SEQUENCE [LARGE SCALE GENOMIC DNA]</scope>
    <source>
        <strain>ATCC 33223 / DSM 2355 / 39E</strain>
    </source>
</reference>
<name>GLYA_THEP3</name>
<evidence type="ECO:0000255" key="1">
    <source>
        <dbReference type="HAMAP-Rule" id="MF_00051"/>
    </source>
</evidence>
<organism>
    <name type="scientific">Thermoanaerobacter pseudethanolicus (strain ATCC 33223 / 39E)</name>
    <name type="common">Clostridium thermohydrosulfuricum</name>
    <dbReference type="NCBI Taxonomy" id="340099"/>
    <lineage>
        <taxon>Bacteria</taxon>
        <taxon>Bacillati</taxon>
        <taxon>Bacillota</taxon>
        <taxon>Clostridia</taxon>
        <taxon>Thermoanaerobacterales</taxon>
        <taxon>Thermoanaerobacteraceae</taxon>
        <taxon>Thermoanaerobacter</taxon>
    </lineage>
</organism>
<accession>B0K742</accession>
<feature type="chain" id="PRO_1000091590" description="Serine hydroxymethyltransferase">
    <location>
        <begin position="1"/>
        <end position="413"/>
    </location>
</feature>
<feature type="binding site" evidence="1">
    <location>
        <position position="119"/>
    </location>
    <ligand>
        <name>(6S)-5,6,7,8-tetrahydrofolate</name>
        <dbReference type="ChEBI" id="CHEBI:57453"/>
    </ligand>
</feature>
<feature type="binding site" evidence="1">
    <location>
        <begin position="123"/>
        <end position="125"/>
    </location>
    <ligand>
        <name>(6S)-5,6,7,8-tetrahydrofolate</name>
        <dbReference type="ChEBI" id="CHEBI:57453"/>
    </ligand>
</feature>
<feature type="binding site" evidence="1">
    <location>
        <position position="243"/>
    </location>
    <ligand>
        <name>(6S)-5,6,7,8-tetrahydrofolate</name>
        <dbReference type="ChEBI" id="CHEBI:57453"/>
    </ligand>
</feature>
<feature type="site" description="Plays an important role in substrate specificity" evidence="1">
    <location>
        <position position="227"/>
    </location>
</feature>
<feature type="modified residue" description="N6-(pyridoxal phosphate)lysine" evidence="1">
    <location>
        <position position="228"/>
    </location>
</feature>
<sequence length="413" mass="45661">MDIEIIRKTDPEIADAIEKELIRQRNKIELIASENFVSRAVMEAMGSPLTNKYAEGYPNKRYYGGCEYVDIAEELARERLKKLFGAEHANVQPHSGAQANMAAYFALIKPGDTVLGMDLAHGGHLTHGSKVNFSGQIYNFVSYGVREDTGYIDYDEVERVAKKHKPKLIVAGASAYPRIIDFKRFREIADKVGAYLMVDMAHIAGLVAAGLHPNPVPYADVVTTTTHKTLRGPRGGAILCKEEYAKAIDKALFPGTQGGPLMHIIAAKAVCFKEALTDEFKEYQKRIVENAKALANALMERGINLVSGGTDNHLMLLDLRNTGITGKELETRLDEVNITCNKNAIPFDPLGPNVTSGVRLGTPAVTTRGMKPEDMVEIADIIVNVIRDENYKEKAKERVANLLKKYPLYEDLI</sequence>
<comment type="function">
    <text evidence="1">Catalyzes the reversible interconversion of serine and glycine with tetrahydrofolate (THF) serving as the one-carbon carrier. This reaction serves as the major source of one-carbon groups required for the biosynthesis of purines, thymidylate, methionine, and other important biomolecules. Also exhibits THF-independent aldolase activity toward beta-hydroxyamino acids, producing glycine and aldehydes, via a retro-aldol mechanism.</text>
</comment>
<comment type="catalytic activity">
    <reaction evidence="1">
        <text>(6R)-5,10-methylene-5,6,7,8-tetrahydrofolate + glycine + H2O = (6S)-5,6,7,8-tetrahydrofolate + L-serine</text>
        <dbReference type="Rhea" id="RHEA:15481"/>
        <dbReference type="ChEBI" id="CHEBI:15377"/>
        <dbReference type="ChEBI" id="CHEBI:15636"/>
        <dbReference type="ChEBI" id="CHEBI:33384"/>
        <dbReference type="ChEBI" id="CHEBI:57305"/>
        <dbReference type="ChEBI" id="CHEBI:57453"/>
        <dbReference type="EC" id="2.1.2.1"/>
    </reaction>
</comment>
<comment type="cofactor">
    <cofactor evidence="1">
        <name>pyridoxal 5'-phosphate</name>
        <dbReference type="ChEBI" id="CHEBI:597326"/>
    </cofactor>
</comment>
<comment type="pathway">
    <text evidence="1">One-carbon metabolism; tetrahydrofolate interconversion.</text>
</comment>
<comment type="pathway">
    <text evidence="1">Amino-acid biosynthesis; glycine biosynthesis; glycine from L-serine: step 1/1.</text>
</comment>
<comment type="subunit">
    <text evidence="1">Homodimer.</text>
</comment>
<comment type="subcellular location">
    <subcellularLocation>
        <location evidence="1">Cytoplasm</location>
    </subcellularLocation>
</comment>
<comment type="similarity">
    <text evidence="1">Belongs to the SHMT family.</text>
</comment>
<protein>
    <recommendedName>
        <fullName evidence="1">Serine hydroxymethyltransferase</fullName>
        <shortName evidence="1">SHMT</shortName>
        <shortName evidence="1">Serine methylase</shortName>
        <ecNumber evidence="1">2.1.2.1</ecNumber>
    </recommendedName>
</protein>
<proteinExistence type="inferred from homology"/>
<dbReference type="EC" id="2.1.2.1" evidence="1"/>
<dbReference type="EMBL" id="CP000924">
    <property type="protein sequence ID" value="ABY94189.1"/>
    <property type="molecule type" value="Genomic_DNA"/>
</dbReference>
<dbReference type="RefSeq" id="WP_003866547.1">
    <property type="nucleotide sequence ID" value="NC_010321.1"/>
</dbReference>
<dbReference type="SMR" id="B0K742"/>
<dbReference type="STRING" id="340099.Teth39_0524"/>
<dbReference type="KEGG" id="tpd:Teth39_0524"/>
<dbReference type="eggNOG" id="COG0112">
    <property type="taxonomic scope" value="Bacteria"/>
</dbReference>
<dbReference type="HOGENOM" id="CLU_022477_2_1_9"/>
<dbReference type="UniPathway" id="UPA00193"/>
<dbReference type="UniPathway" id="UPA00288">
    <property type="reaction ID" value="UER01023"/>
</dbReference>
<dbReference type="Proteomes" id="UP000002156">
    <property type="component" value="Chromosome"/>
</dbReference>
<dbReference type="GO" id="GO:0005829">
    <property type="term" value="C:cytosol"/>
    <property type="evidence" value="ECO:0007669"/>
    <property type="project" value="TreeGrafter"/>
</dbReference>
<dbReference type="GO" id="GO:0004372">
    <property type="term" value="F:glycine hydroxymethyltransferase activity"/>
    <property type="evidence" value="ECO:0007669"/>
    <property type="project" value="UniProtKB-UniRule"/>
</dbReference>
<dbReference type="GO" id="GO:0030170">
    <property type="term" value="F:pyridoxal phosphate binding"/>
    <property type="evidence" value="ECO:0007669"/>
    <property type="project" value="UniProtKB-UniRule"/>
</dbReference>
<dbReference type="GO" id="GO:0019264">
    <property type="term" value="P:glycine biosynthetic process from serine"/>
    <property type="evidence" value="ECO:0007669"/>
    <property type="project" value="UniProtKB-UniRule"/>
</dbReference>
<dbReference type="GO" id="GO:0035999">
    <property type="term" value="P:tetrahydrofolate interconversion"/>
    <property type="evidence" value="ECO:0007669"/>
    <property type="project" value="UniProtKB-UniRule"/>
</dbReference>
<dbReference type="CDD" id="cd00378">
    <property type="entry name" value="SHMT"/>
    <property type="match status" value="1"/>
</dbReference>
<dbReference type="FunFam" id="3.40.640.10:FF:000001">
    <property type="entry name" value="Serine hydroxymethyltransferase"/>
    <property type="match status" value="1"/>
</dbReference>
<dbReference type="FunFam" id="3.90.1150.10:FF:000003">
    <property type="entry name" value="Serine hydroxymethyltransferase"/>
    <property type="match status" value="1"/>
</dbReference>
<dbReference type="Gene3D" id="3.90.1150.10">
    <property type="entry name" value="Aspartate Aminotransferase, domain 1"/>
    <property type="match status" value="1"/>
</dbReference>
<dbReference type="Gene3D" id="3.40.640.10">
    <property type="entry name" value="Type I PLP-dependent aspartate aminotransferase-like (Major domain)"/>
    <property type="match status" value="1"/>
</dbReference>
<dbReference type="HAMAP" id="MF_00051">
    <property type="entry name" value="SHMT"/>
    <property type="match status" value="1"/>
</dbReference>
<dbReference type="InterPro" id="IPR015424">
    <property type="entry name" value="PyrdxlP-dep_Trfase"/>
</dbReference>
<dbReference type="InterPro" id="IPR015421">
    <property type="entry name" value="PyrdxlP-dep_Trfase_major"/>
</dbReference>
<dbReference type="InterPro" id="IPR015422">
    <property type="entry name" value="PyrdxlP-dep_Trfase_small"/>
</dbReference>
<dbReference type="InterPro" id="IPR001085">
    <property type="entry name" value="Ser_HO-MeTrfase"/>
</dbReference>
<dbReference type="InterPro" id="IPR049943">
    <property type="entry name" value="Ser_HO-MeTrfase-like"/>
</dbReference>
<dbReference type="InterPro" id="IPR019798">
    <property type="entry name" value="Ser_HO-MeTrfase_PLP_BS"/>
</dbReference>
<dbReference type="InterPro" id="IPR039429">
    <property type="entry name" value="SHMT-like_dom"/>
</dbReference>
<dbReference type="NCBIfam" id="NF000586">
    <property type="entry name" value="PRK00011.1"/>
    <property type="match status" value="1"/>
</dbReference>
<dbReference type="PANTHER" id="PTHR11680">
    <property type="entry name" value="SERINE HYDROXYMETHYLTRANSFERASE"/>
    <property type="match status" value="1"/>
</dbReference>
<dbReference type="PANTHER" id="PTHR11680:SF35">
    <property type="entry name" value="SERINE HYDROXYMETHYLTRANSFERASE 1"/>
    <property type="match status" value="1"/>
</dbReference>
<dbReference type="Pfam" id="PF00464">
    <property type="entry name" value="SHMT"/>
    <property type="match status" value="1"/>
</dbReference>
<dbReference type="PIRSF" id="PIRSF000412">
    <property type="entry name" value="SHMT"/>
    <property type="match status" value="1"/>
</dbReference>
<dbReference type="SUPFAM" id="SSF53383">
    <property type="entry name" value="PLP-dependent transferases"/>
    <property type="match status" value="1"/>
</dbReference>
<dbReference type="PROSITE" id="PS00096">
    <property type="entry name" value="SHMT"/>
    <property type="match status" value="1"/>
</dbReference>
<keyword id="KW-0028">Amino-acid biosynthesis</keyword>
<keyword id="KW-0963">Cytoplasm</keyword>
<keyword id="KW-0554">One-carbon metabolism</keyword>
<keyword id="KW-0663">Pyridoxal phosphate</keyword>
<keyword id="KW-1185">Reference proteome</keyword>
<keyword id="KW-0808">Transferase</keyword>
<gene>
    <name evidence="1" type="primary">glyA</name>
    <name type="ordered locus">Teth39_0524</name>
</gene>